<reference key="1">
    <citation type="journal article" date="2000" name="DNA Res.">
        <title>Complete genome structure of the nitrogen-fixing symbiotic bacterium Mesorhizobium loti.</title>
        <authorList>
            <person name="Kaneko T."/>
            <person name="Nakamura Y."/>
            <person name="Sato S."/>
            <person name="Asamizu E."/>
            <person name="Kato T."/>
            <person name="Sasamoto S."/>
            <person name="Watanabe A."/>
            <person name="Idesawa K."/>
            <person name="Ishikawa A."/>
            <person name="Kawashima K."/>
            <person name="Kimura T."/>
            <person name="Kishida Y."/>
            <person name="Kiyokawa C."/>
            <person name="Kohara M."/>
            <person name="Matsumoto M."/>
            <person name="Matsuno A."/>
            <person name="Mochizuki Y."/>
            <person name="Nakayama S."/>
            <person name="Nakazaki N."/>
            <person name="Shimpo S."/>
            <person name="Sugimoto M."/>
            <person name="Takeuchi C."/>
            <person name="Yamada M."/>
            <person name="Tabata S."/>
        </authorList>
    </citation>
    <scope>NUCLEOTIDE SEQUENCE [LARGE SCALE GENOMIC DNA]</scope>
    <source>
        <strain>LMG 29417 / CECT 9101 / MAFF 303099</strain>
    </source>
</reference>
<name>MNMG_RHILO</name>
<organism>
    <name type="scientific">Mesorhizobium japonicum (strain LMG 29417 / CECT 9101 / MAFF 303099)</name>
    <name type="common">Mesorhizobium loti (strain MAFF 303099)</name>
    <dbReference type="NCBI Taxonomy" id="266835"/>
    <lineage>
        <taxon>Bacteria</taxon>
        <taxon>Pseudomonadati</taxon>
        <taxon>Pseudomonadota</taxon>
        <taxon>Alphaproteobacteria</taxon>
        <taxon>Hyphomicrobiales</taxon>
        <taxon>Phyllobacteriaceae</taxon>
        <taxon>Mesorhizobium</taxon>
    </lineage>
</organism>
<keyword id="KW-0963">Cytoplasm</keyword>
<keyword id="KW-0274">FAD</keyword>
<keyword id="KW-0285">Flavoprotein</keyword>
<keyword id="KW-0520">NAD</keyword>
<keyword id="KW-0819">tRNA processing</keyword>
<accession>Q98DZ1</accession>
<dbReference type="EMBL" id="BA000012">
    <property type="protein sequence ID" value="BAB51129.1"/>
    <property type="molecule type" value="Genomic_DNA"/>
</dbReference>
<dbReference type="RefSeq" id="WP_010912471.1">
    <property type="nucleotide sequence ID" value="NC_002678.2"/>
</dbReference>
<dbReference type="SMR" id="Q98DZ1"/>
<dbReference type="KEGG" id="mlo:mll4482"/>
<dbReference type="PATRIC" id="fig|266835.9.peg.3542"/>
<dbReference type="eggNOG" id="COG0445">
    <property type="taxonomic scope" value="Bacteria"/>
</dbReference>
<dbReference type="HOGENOM" id="CLU_007831_2_2_5"/>
<dbReference type="Proteomes" id="UP000000552">
    <property type="component" value="Chromosome"/>
</dbReference>
<dbReference type="GO" id="GO:0005829">
    <property type="term" value="C:cytosol"/>
    <property type="evidence" value="ECO:0007669"/>
    <property type="project" value="TreeGrafter"/>
</dbReference>
<dbReference type="GO" id="GO:0050660">
    <property type="term" value="F:flavin adenine dinucleotide binding"/>
    <property type="evidence" value="ECO:0007669"/>
    <property type="project" value="UniProtKB-UniRule"/>
</dbReference>
<dbReference type="GO" id="GO:0030488">
    <property type="term" value="P:tRNA methylation"/>
    <property type="evidence" value="ECO:0007669"/>
    <property type="project" value="TreeGrafter"/>
</dbReference>
<dbReference type="GO" id="GO:0002098">
    <property type="term" value="P:tRNA wobble uridine modification"/>
    <property type="evidence" value="ECO:0007669"/>
    <property type="project" value="InterPro"/>
</dbReference>
<dbReference type="FunFam" id="3.50.50.60:FF:000082">
    <property type="entry name" value="protein MTO1 homolog, mitochondrial isoform X1"/>
    <property type="match status" value="1"/>
</dbReference>
<dbReference type="FunFam" id="3.50.50.60:FF:000002">
    <property type="entry name" value="tRNA uridine 5-carboxymethylaminomethyl modification enzyme MnmG"/>
    <property type="match status" value="1"/>
</dbReference>
<dbReference type="Gene3D" id="3.50.50.60">
    <property type="entry name" value="FAD/NAD(P)-binding domain"/>
    <property type="match status" value="2"/>
</dbReference>
<dbReference type="Gene3D" id="1.10.150.570">
    <property type="entry name" value="GidA associated domain, C-terminal subdomain"/>
    <property type="match status" value="1"/>
</dbReference>
<dbReference type="Gene3D" id="1.10.10.1800">
    <property type="entry name" value="tRNA uridine 5-carboxymethylaminomethyl modification enzyme MnmG/GidA"/>
    <property type="match status" value="1"/>
</dbReference>
<dbReference type="HAMAP" id="MF_00129">
    <property type="entry name" value="MnmG_GidA"/>
    <property type="match status" value="1"/>
</dbReference>
<dbReference type="InterPro" id="IPR036188">
    <property type="entry name" value="FAD/NAD-bd_sf"/>
</dbReference>
<dbReference type="InterPro" id="IPR049312">
    <property type="entry name" value="GIDA_C_N"/>
</dbReference>
<dbReference type="InterPro" id="IPR004416">
    <property type="entry name" value="MnmG"/>
</dbReference>
<dbReference type="InterPro" id="IPR002218">
    <property type="entry name" value="MnmG-rel"/>
</dbReference>
<dbReference type="InterPro" id="IPR020595">
    <property type="entry name" value="MnmG-rel_CS"/>
</dbReference>
<dbReference type="InterPro" id="IPR026904">
    <property type="entry name" value="MnmG_C"/>
</dbReference>
<dbReference type="InterPro" id="IPR047001">
    <property type="entry name" value="MnmG_C_subdom"/>
</dbReference>
<dbReference type="InterPro" id="IPR044920">
    <property type="entry name" value="MnmG_C_subdom_sf"/>
</dbReference>
<dbReference type="InterPro" id="IPR040131">
    <property type="entry name" value="MnmG_N"/>
</dbReference>
<dbReference type="NCBIfam" id="TIGR00136">
    <property type="entry name" value="mnmG_gidA"/>
    <property type="match status" value="1"/>
</dbReference>
<dbReference type="PANTHER" id="PTHR11806">
    <property type="entry name" value="GLUCOSE INHIBITED DIVISION PROTEIN A"/>
    <property type="match status" value="1"/>
</dbReference>
<dbReference type="PANTHER" id="PTHR11806:SF0">
    <property type="entry name" value="PROTEIN MTO1 HOMOLOG, MITOCHONDRIAL"/>
    <property type="match status" value="1"/>
</dbReference>
<dbReference type="Pfam" id="PF01134">
    <property type="entry name" value="GIDA"/>
    <property type="match status" value="1"/>
</dbReference>
<dbReference type="Pfam" id="PF21680">
    <property type="entry name" value="GIDA_C_1st"/>
    <property type="match status" value="1"/>
</dbReference>
<dbReference type="Pfam" id="PF13932">
    <property type="entry name" value="SAM_GIDA_C"/>
    <property type="match status" value="1"/>
</dbReference>
<dbReference type="PRINTS" id="PR00411">
    <property type="entry name" value="PNDRDTASEI"/>
</dbReference>
<dbReference type="SMART" id="SM01228">
    <property type="entry name" value="GIDA_assoc_3"/>
    <property type="match status" value="1"/>
</dbReference>
<dbReference type="SUPFAM" id="SSF51905">
    <property type="entry name" value="FAD/NAD(P)-binding domain"/>
    <property type="match status" value="1"/>
</dbReference>
<dbReference type="PROSITE" id="PS01280">
    <property type="entry name" value="GIDA_1"/>
    <property type="match status" value="1"/>
</dbReference>
<dbReference type="PROSITE" id="PS01281">
    <property type="entry name" value="GIDA_2"/>
    <property type="match status" value="1"/>
</dbReference>
<gene>
    <name evidence="1" type="primary">mnmG</name>
    <name evidence="1" type="synonym">gidA</name>
    <name type="ordered locus">mll4482</name>
</gene>
<comment type="function">
    <text evidence="1">NAD-binding protein involved in the addition of a carboxymethylaminomethyl (cmnm) group at the wobble position (U34) of certain tRNAs, forming tRNA-cmnm(5)s(2)U34.</text>
</comment>
<comment type="cofactor">
    <cofactor evidence="1">
        <name>FAD</name>
        <dbReference type="ChEBI" id="CHEBI:57692"/>
    </cofactor>
</comment>
<comment type="subunit">
    <text evidence="1">Homodimer. Heterotetramer of two MnmE and two MnmG subunits.</text>
</comment>
<comment type="subcellular location">
    <subcellularLocation>
        <location evidence="1">Cytoplasm</location>
    </subcellularLocation>
</comment>
<comment type="similarity">
    <text evidence="1">Belongs to the MnmG family.</text>
</comment>
<feature type="chain" id="PRO_0000117160" description="tRNA uridine 5-carboxymethylaminomethyl modification enzyme MnmG">
    <location>
        <begin position="1"/>
        <end position="623"/>
    </location>
</feature>
<feature type="binding site" evidence="1">
    <location>
        <begin position="11"/>
        <end position="16"/>
    </location>
    <ligand>
        <name>FAD</name>
        <dbReference type="ChEBI" id="CHEBI:57692"/>
    </ligand>
</feature>
<feature type="binding site" evidence="1">
    <location>
        <position position="123"/>
    </location>
    <ligand>
        <name>FAD</name>
        <dbReference type="ChEBI" id="CHEBI:57692"/>
    </ligand>
</feature>
<feature type="binding site" evidence="1">
    <location>
        <position position="178"/>
    </location>
    <ligand>
        <name>FAD</name>
        <dbReference type="ChEBI" id="CHEBI:57692"/>
    </ligand>
</feature>
<feature type="binding site" evidence="1">
    <location>
        <begin position="270"/>
        <end position="284"/>
    </location>
    <ligand>
        <name>NAD(+)</name>
        <dbReference type="ChEBI" id="CHEBI:57540"/>
    </ligand>
</feature>
<feature type="binding site" evidence="1">
    <location>
        <position position="367"/>
    </location>
    <ligand>
        <name>FAD</name>
        <dbReference type="ChEBI" id="CHEBI:57692"/>
    </ligand>
</feature>
<sequence length="623" mass="67826">MTDHYDVVVVGGGHAGCEAASAAARAGAKTALVTLRFDTIGVMSCNPAIGGLGKGHLVREIDAMDGLMGRVADAAGIQFRLLNRRKGPAVRGPRTQADRKLYRLAMQEAIRQQNDLDVVEGEVLDFEINEGRITAVLLAGGRRLACGAVVLTTGTFLRGLIHIGEKKIVAGRMNEQASLGLSATMDRAGFKLGRLKTGTPPRLDGKTIDWASLESQAADEDPVPFSLMSDRITTPQIECGITRTTSATHELIRANLGRSAMYSGSIEGVGPRYCPSIEDKIVKFGDRDGHQIFLEPEGLDDDTVYPNGISTSLPQDVQLEILKTIPGLERATMLQPGYAIEYDHVDPRELHQTLETKRIAGLFLAGQINGTTGYEEAAGQGLLAGLNAARRAAGGEQIVLSRTEAYIGVMVDDLTSRGISEPYRMFTSRAEFRLSLRADNADERLTPLAAKLGIASVQRMQRYGDVMQRLDAARELARSVAMTPNEAARQGLEINRDGVRRSGYELLAYPDVDVAWLARVEPKFAAIDAKTAERLETEAKYSVYLDRQKSDVAQIRHEESRLIPETVDFAGVPGLSNELKQKMQARRPRSIADAQRMEGMTPAALAIIVAHVRHYENAQRDVA</sequence>
<protein>
    <recommendedName>
        <fullName evidence="1">tRNA uridine 5-carboxymethylaminomethyl modification enzyme MnmG</fullName>
    </recommendedName>
    <alternativeName>
        <fullName evidence="1">Glucose-inhibited division protein A</fullName>
    </alternativeName>
</protein>
<evidence type="ECO:0000255" key="1">
    <source>
        <dbReference type="HAMAP-Rule" id="MF_00129"/>
    </source>
</evidence>
<proteinExistence type="inferred from homology"/>